<comment type="function">
    <text>May be involved in mitochondrial organization and biogenesis.</text>
</comment>
<comment type="subcellular location">
    <subcellularLocation>
        <location evidence="2">Cytoplasm</location>
    </subcellularLocation>
    <subcellularLocation>
        <location evidence="2">Nucleus</location>
    </subcellularLocation>
</comment>
<comment type="disruption phenotype">
    <text evidence="4">Sensitive to nickel.</text>
</comment>
<comment type="miscellaneous">
    <text evidence="3">Present with 3040 molecules/cell in log phase SD medium.</text>
</comment>
<comment type="similarity">
    <text evidence="5">Belongs to the actin-binding proteins ADF family. GMF subfamily.</text>
</comment>
<name>AIM7_YEAST</name>
<accession>Q12156</accession>
<accession>D6VS49</accession>
<organism>
    <name type="scientific">Saccharomyces cerevisiae (strain ATCC 204508 / S288c)</name>
    <name type="common">Baker's yeast</name>
    <dbReference type="NCBI Taxonomy" id="559292"/>
    <lineage>
        <taxon>Eukaryota</taxon>
        <taxon>Fungi</taxon>
        <taxon>Dikarya</taxon>
        <taxon>Ascomycota</taxon>
        <taxon>Saccharomycotina</taxon>
        <taxon>Saccharomycetes</taxon>
        <taxon>Saccharomycetales</taxon>
        <taxon>Saccharomycetaceae</taxon>
        <taxon>Saccharomyces</taxon>
    </lineage>
</organism>
<gene>
    <name type="primary">AIM7</name>
    <name type="ordered locus">YDR063W</name>
    <name type="ORF">D4245</name>
</gene>
<protein>
    <recommendedName>
        <fullName>Protein AIM7</fullName>
    </recommendedName>
    <alternativeName>
        <fullName>Altered inheritance rate of mitochondria protein 7</fullName>
    </alternativeName>
</protein>
<dbReference type="EMBL" id="X84162">
    <property type="protein sequence ID" value="CAA58979.1"/>
    <property type="molecule type" value="Genomic_DNA"/>
</dbReference>
<dbReference type="EMBL" id="Z49209">
    <property type="protein sequence ID" value="CAA89092.1"/>
    <property type="molecule type" value="Genomic_DNA"/>
</dbReference>
<dbReference type="EMBL" id="Z74359">
    <property type="protein sequence ID" value="CAA98881.1"/>
    <property type="molecule type" value="Genomic_DNA"/>
</dbReference>
<dbReference type="EMBL" id="BK006938">
    <property type="protein sequence ID" value="DAA11909.1"/>
    <property type="molecule type" value="Genomic_DNA"/>
</dbReference>
<dbReference type="PIR" id="S54047">
    <property type="entry name" value="S54047"/>
</dbReference>
<dbReference type="RefSeq" id="NP_010348.1">
    <property type="nucleotide sequence ID" value="NM_001180371.1"/>
</dbReference>
<dbReference type="SMR" id="Q12156"/>
<dbReference type="BioGRID" id="32118">
    <property type="interactions" value="112"/>
</dbReference>
<dbReference type="DIP" id="DIP-1818N"/>
<dbReference type="FunCoup" id="Q12156">
    <property type="interactions" value="139"/>
</dbReference>
<dbReference type="IntAct" id="Q12156">
    <property type="interactions" value="6"/>
</dbReference>
<dbReference type="MINT" id="Q12156"/>
<dbReference type="STRING" id="4932.YDR063W"/>
<dbReference type="iPTMnet" id="Q12156"/>
<dbReference type="PaxDb" id="4932-YDR063W"/>
<dbReference type="PeptideAtlas" id="Q12156"/>
<dbReference type="EnsemblFungi" id="YDR063W_mRNA">
    <property type="protein sequence ID" value="YDR063W"/>
    <property type="gene ID" value="YDR063W"/>
</dbReference>
<dbReference type="GeneID" id="851635"/>
<dbReference type="KEGG" id="sce:YDR063W"/>
<dbReference type="AGR" id="SGD:S000002470"/>
<dbReference type="SGD" id="S000002470">
    <property type="gene designation" value="AIM7"/>
</dbReference>
<dbReference type="VEuPathDB" id="FungiDB:YDR063W"/>
<dbReference type="eggNOG" id="KOG1736">
    <property type="taxonomic scope" value="Eukaryota"/>
</dbReference>
<dbReference type="GeneTree" id="ENSGT00390000008920"/>
<dbReference type="HOGENOM" id="CLU_087056_1_1_1"/>
<dbReference type="InParanoid" id="Q12156"/>
<dbReference type="OMA" id="EWKMLYA"/>
<dbReference type="OrthoDB" id="3919494at2759"/>
<dbReference type="BioCyc" id="YEAST:G3O-29670-MONOMER"/>
<dbReference type="Reactome" id="R-SCE-6798695">
    <property type="pathway name" value="Neutrophil degranulation"/>
</dbReference>
<dbReference type="BioGRID-ORCS" id="851635">
    <property type="hits" value="3 hits in 10 CRISPR screens"/>
</dbReference>
<dbReference type="PRO" id="PR:Q12156"/>
<dbReference type="Proteomes" id="UP000002311">
    <property type="component" value="Chromosome IV"/>
</dbReference>
<dbReference type="RNAct" id="Q12156">
    <property type="molecule type" value="protein"/>
</dbReference>
<dbReference type="GO" id="GO:0030479">
    <property type="term" value="C:actin cortical patch"/>
    <property type="evidence" value="ECO:0000314"/>
    <property type="project" value="SGD"/>
</dbReference>
<dbReference type="GO" id="GO:0030864">
    <property type="term" value="C:cortical actin cytoskeleton"/>
    <property type="evidence" value="ECO:0000318"/>
    <property type="project" value="GO_Central"/>
</dbReference>
<dbReference type="GO" id="GO:0005737">
    <property type="term" value="C:cytoplasm"/>
    <property type="evidence" value="ECO:0000314"/>
    <property type="project" value="SGD"/>
</dbReference>
<dbReference type="GO" id="GO:0005634">
    <property type="term" value="C:nucleus"/>
    <property type="evidence" value="ECO:0007005"/>
    <property type="project" value="SGD"/>
</dbReference>
<dbReference type="GO" id="GO:0003779">
    <property type="term" value="F:actin binding"/>
    <property type="evidence" value="ECO:0007669"/>
    <property type="project" value="InterPro"/>
</dbReference>
<dbReference type="GO" id="GO:0071933">
    <property type="term" value="F:Arp2/3 complex binding"/>
    <property type="evidence" value="ECO:0000314"/>
    <property type="project" value="MGI"/>
</dbReference>
<dbReference type="GO" id="GO:0071846">
    <property type="term" value="P:actin filament debranching"/>
    <property type="evidence" value="ECO:0000314"/>
    <property type="project" value="SGD"/>
</dbReference>
<dbReference type="GO" id="GO:0034316">
    <property type="term" value="P:negative regulation of Arp2/3 complex-mediated actin nucleation"/>
    <property type="evidence" value="ECO:0000314"/>
    <property type="project" value="SGD"/>
</dbReference>
<dbReference type="FunFam" id="3.40.20.10:FF:000063">
    <property type="entry name" value="YDR063W-like protein"/>
    <property type="match status" value="1"/>
</dbReference>
<dbReference type="Gene3D" id="3.40.20.10">
    <property type="entry name" value="Severin"/>
    <property type="match status" value="1"/>
</dbReference>
<dbReference type="InterPro" id="IPR002108">
    <property type="entry name" value="ADF-H"/>
</dbReference>
<dbReference type="InterPro" id="IPR029006">
    <property type="entry name" value="ADF-H/Gelsolin-like_dom_sf"/>
</dbReference>
<dbReference type="InterPro" id="IPR011171">
    <property type="entry name" value="GMF"/>
</dbReference>
<dbReference type="PANTHER" id="PTHR11249:SF2">
    <property type="entry name" value="GLIA MATURATION FACTOR"/>
    <property type="match status" value="1"/>
</dbReference>
<dbReference type="PANTHER" id="PTHR11249">
    <property type="entry name" value="GLIAL FACTOR NATURATION FACTOR"/>
    <property type="match status" value="1"/>
</dbReference>
<dbReference type="Pfam" id="PF00241">
    <property type="entry name" value="Cofilin_ADF"/>
    <property type="match status" value="1"/>
</dbReference>
<dbReference type="PIRSF" id="PIRSF001788">
    <property type="entry name" value="GMF-beta"/>
    <property type="match status" value="1"/>
</dbReference>
<dbReference type="SMART" id="SM00102">
    <property type="entry name" value="ADF"/>
    <property type="match status" value="1"/>
</dbReference>
<dbReference type="SUPFAM" id="SSF55753">
    <property type="entry name" value="Actin depolymerizing proteins"/>
    <property type="match status" value="1"/>
</dbReference>
<dbReference type="PROSITE" id="PS51263">
    <property type="entry name" value="ADF_H"/>
    <property type="match status" value="1"/>
</dbReference>
<reference key="1">
    <citation type="journal article" date="1996" name="Yeast">
        <title>Nucleotide sequence analysis of a 32,500 bp region of the right arm of Saccharomyces cerevisiae chromosome IV.</title>
        <authorList>
            <person name="Brandt P."/>
            <person name="Ramlow S."/>
            <person name="Otto B."/>
            <person name="Bloecker H."/>
        </authorList>
    </citation>
    <scope>NUCLEOTIDE SEQUENCE [GENOMIC DNA]</scope>
</reference>
<reference key="2">
    <citation type="journal article" date="1997" name="Nature">
        <title>The nucleotide sequence of Saccharomyces cerevisiae chromosome IV.</title>
        <authorList>
            <person name="Jacq C."/>
            <person name="Alt-Moerbe J."/>
            <person name="Andre B."/>
            <person name="Arnold W."/>
            <person name="Bahr A."/>
            <person name="Ballesta J.P.G."/>
            <person name="Bargues M."/>
            <person name="Baron L."/>
            <person name="Becker A."/>
            <person name="Biteau N."/>
            <person name="Bloecker H."/>
            <person name="Blugeon C."/>
            <person name="Boskovic J."/>
            <person name="Brandt P."/>
            <person name="Brueckner M."/>
            <person name="Buitrago M.J."/>
            <person name="Coster F."/>
            <person name="Delaveau T."/>
            <person name="del Rey F."/>
            <person name="Dujon B."/>
            <person name="Eide L.G."/>
            <person name="Garcia-Cantalejo J.M."/>
            <person name="Goffeau A."/>
            <person name="Gomez-Peris A."/>
            <person name="Granotier C."/>
            <person name="Hanemann V."/>
            <person name="Hankeln T."/>
            <person name="Hoheisel J.D."/>
            <person name="Jaeger W."/>
            <person name="Jimenez A."/>
            <person name="Jonniaux J.-L."/>
            <person name="Kraemer C."/>
            <person name="Kuester H."/>
            <person name="Laamanen P."/>
            <person name="Legros Y."/>
            <person name="Louis E.J."/>
            <person name="Moeller-Rieker S."/>
            <person name="Monnet A."/>
            <person name="Moro M."/>
            <person name="Mueller-Auer S."/>
            <person name="Nussbaumer B."/>
            <person name="Paricio N."/>
            <person name="Paulin L."/>
            <person name="Perea J."/>
            <person name="Perez-Alonso M."/>
            <person name="Perez-Ortin J.E."/>
            <person name="Pohl T.M."/>
            <person name="Prydz H."/>
            <person name="Purnelle B."/>
            <person name="Rasmussen S.W."/>
            <person name="Remacha M.A."/>
            <person name="Revuelta J.L."/>
            <person name="Rieger M."/>
            <person name="Salom D."/>
            <person name="Saluz H.P."/>
            <person name="Saiz J.E."/>
            <person name="Saren A.-M."/>
            <person name="Schaefer M."/>
            <person name="Scharfe M."/>
            <person name="Schmidt E.R."/>
            <person name="Schneider C."/>
            <person name="Scholler P."/>
            <person name="Schwarz S."/>
            <person name="Soler-Mira A."/>
            <person name="Urrestarazu L.A."/>
            <person name="Verhasselt P."/>
            <person name="Vissers S."/>
            <person name="Voet M."/>
            <person name="Volckaert G."/>
            <person name="Wagner G."/>
            <person name="Wambutt R."/>
            <person name="Wedler E."/>
            <person name="Wedler H."/>
            <person name="Woelfl S."/>
            <person name="Harris D.E."/>
            <person name="Bowman S."/>
            <person name="Brown D."/>
            <person name="Churcher C.M."/>
            <person name="Connor R."/>
            <person name="Dedman K."/>
            <person name="Gentles S."/>
            <person name="Hamlin N."/>
            <person name="Hunt S."/>
            <person name="Jones L."/>
            <person name="McDonald S."/>
            <person name="Murphy L.D."/>
            <person name="Niblett D."/>
            <person name="Odell C."/>
            <person name="Oliver K."/>
            <person name="Rajandream M.A."/>
            <person name="Richards C."/>
            <person name="Shore L."/>
            <person name="Walsh S.V."/>
            <person name="Barrell B.G."/>
            <person name="Dietrich F.S."/>
            <person name="Mulligan J.T."/>
            <person name="Allen E."/>
            <person name="Araujo R."/>
            <person name="Aviles E."/>
            <person name="Berno A."/>
            <person name="Carpenter J."/>
            <person name="Chen E."/>
            <person name="Cherry J.M."/>
            <person name="Chung E."/>
            <person name="Duncan M."/>
            <person name="Hunicke-Smith S."/>
            <person name="Hyman R.W."/>
            <person name="Komp C."/>
            <person name="Lashkari D."/>
            <person name="Lew H."/>
            <person name="Lin D."/>
            <person name="Mosedale D."/>
            <person name="Nakahara K."/>
            <person name="Namath A."/>
            <person name="Oefner P."/>
            <person name="Oh C."/>
            <person name="Petel F.X."/>
            <person name="Roberts D."/>
            <person name="Schramm S."/>
            <person name="Schroeder M."/>
            <person name="Shogren T."/>
            <person name="Shroff N."/>
            <person name="Winant A."/>
            <person name="Yelton M.A."/>
            <person name="Botstein D."/>
            <person name="Davis R.W."/>
            <person name="Johnston M."/>
            <person name="Andrews S."/>
            <person name="Brinkman R."/>
            <person name="Cooper J."/>
            <person name="Ding H."/>
            <person name="Du Z."/>
            <person name="Favello A."/>
            <person name="Fulton L."/>
            <person name="Gattung S."/>
            <person name="Greco T."/>
            <person name="Hallsworth K."/>
            <person name="Hawkins J."/>
            <person name="Hillier L.W."/>
            <person name="Jier M."/>
            <person name="Johnson D."/>
            <person name="Johnston L."/>
            <person name="Kirsten J."/>
            <person name="Kucaba T."/>
            <person name="Langston Y."/>
            <person name="Latreille P."/>
            <person name="Le T."/>
            <person name="Mardis E."/>
            <person name="Menezes S."/>
            <person name="Miller N."/>
            <person name="Nhan M."/>
            <person name="Pauley A."/>
            <person name="Peluso D."/>
            <person name="Rifkin L."/>
            <person name="Riles L."/>
            <person name="Taich A."/>
            <person name="Trevaskis E."/>
            <person name="Vignati D."/>
            <person name="Wilcox L."/>
            <person name="Wohldman P."/>
            <person name="Vaudin M."/>
            <person name="Wilson R."/>
            <person name="Waterston R."/>
            <person name="Albermann K."/>
            <person name="Hani J."/>
            <person name="Heumann K."/>
            <person name="Kleine K."/>
            <person name="Mewes H.-W."/>
            <person name="Zollner A."/>
            <person name="Zaccaria P."/>
        </authorList>
    </citation>
    <scope>NUCLEOTIDE SEQUENCE [LARGE SCALE GENOMIC DNA]</scope>
    <source>
        <strain>ATCC 204508 / S288c</strain>
    </source>
</reference>
<reference key="3">
    <citation type="journal article" date="2014" name="G3 (Bethesda)">
        <title>The reference genome sequence of Saccharomyces cerevisiae: Then and now.</title>
        <authorList>
            <person name="Engel S.R."/>
            <person name="Dietrich F.S."/>
            <person name="Fisk D.G."/>
            <person name="Binkley G."/>
            <person name="Balakrishnan R."/>
            <person name="Costanzo M.C."/>
            <person name="Dwight S.S."/>
            <person name="Hitz B.C."/>
            <person name="Karra K."/>
            <person name="Nash R.S."/>
            <person name="Weng S."/>
            <person name="Wong E.D."/>
            <person name="Lloyd P."/>
            <person name="Skrzypek M.S."/>
            <person name="Miyasato S.R."/>
            <person name="Simison M."/>
            <person name="Cherry J.M."/>
        </authorList>
    </citation>
    <scope>GENOME REANNOTATION</scope>
    <source>
        <strain>ATCC 204508 / S288c</strain>
    </source>
</reference>
<reference key="4">
    <citation type="journal article" date="2003" name="Nature">
        <title>Global analysis of protein localization in budding yeast.</title>
        <authorList>
            <person name="Huh W.-K."/>
            <person name="Falvo J.V."/>
            <person name="Gerke L.C."/>
            <person name="Carroll A.S."/>
            <person name="Howson R.W."/>
            <person name="Weissman J.S."/>
            <person name="O'Shea E.K."/>
        </authorList>
    </citation>
    <scope>SUBCELLULAR LOCATION [LARGE SCALE ANALYSIS]</scope>
</reference>
<reference key="5">
    <citation type="journal article" date="2003" name="Nature">
        <title>Global analysis of protein expression in yeast.</title>
        <authorList>
            <person name="Ghaemmaghami S."/>
            <person name="Huh W.-K."/>
            <person name="Bower K."/>
            <person name="Howson R.W."/>
            <person name="Belle A."/>
            <person name="Dephoure N."/>
            <person name="O'Shea E.K."/>
            <person name="Weissman J.S."/>
        </authorList>
    </citation>
    <scope>LEVEL OF PROTEIN EXPRESSION [LARGE SCALE ANALYSIS]</scope>
</reference>
<reference key="6">
    <citation type="journal article" date="2007" name="Mol. Microbiol.">
        <title>Phenotypic heterogeneity can enhance rare-cell survival in 'stress-sensitive' yeast populations.</title>
        <authorList>
            <person name="Bishop A.L."/>
            <person name="Rab F.A."/>
            <person name="Sumner E.R."/>
            <person name="Avery S.V."/>
        </authorList>
    </citation>
    <scope>DISRUPTION PHENOTYPE</scope>
</reference>
<reference key="7">
    <citation type="journal article" date="2008" name="Mol. Cell. Proteomics">
        <title>A multidimensional chromatography technology for in-depth phosphoproteome analysis.</title>
        <authorList>
            <person name="Albuquerque C.P."/>
            <person name="Smolka M.B."/>
            <person name="Payne S.H."/>
            <person name="Bafna V."/>
            <person name="Eng J."/>
            <person name="Zhou H."/>
        </authorList>
    </citation>
    <scope>PHOSPHORYLATION [LARGE SCALE ANALYSIS] AT SER-137</scope>
    <scope>IDENTIFICATION BY MASS SPECTROMETRY [LARGE SCALE ANALYSIS]</scope>
</reference>
<reference key="8">
    <citation type="journal article" date="2009" name="PLoS Genet.">
        <title>Computationally driven, quantitative experiments discover genes required for mitochondrial biogenesis.</title>
        <authorList>
            <person name="Hess D.C."/>
            <person name="Myers C.L."/>
            <person name="Huttenhower C."/>
            <person name="Hibbs M.A."/>
            <person name="Hayes A.P."/>
            <person name="Paw J."/>
            <person name="Clore J.J."/>
            <person name="Mendoza R.M."/>
            <person name="Luis B.S."/>
            <person name="Nislow C."/>
            <person name="Giaever G."/>
            <person name="Costanzo M."/>
            <person name="Troyanskaya O.G."/>
            <person name="Caudy A.A."/>
        </authorList>
    </citation>
    <scope>PREDICTION OF FUNCTION</scope>
</reference>
<reference key="9">
    <citation type="journal article" date="2009" name="Science">
        <title>Global analysis of Cdk1 substrate phosphorylation sites provides insights into evolution.</title>
        <authorList>
            <person name="Holt L.J."/>
            <person name="Tuch B.B."/>
            <person name="Villen J."/>
            <person name="Johnson A.D."/>
            <person name="Gygi S.P."/>
            <person name="Morgan D.O."/>
        </authorList>
    </citation>
    <scope>PHOSPHORYLATION [LARGE SCALE ANALYSIS] AT SER-137</scope>
    <scope>IDENTIFICATION BY MASS SPECTROMETRY [LARGE SCALE ANALYSIS]</scope>
</reference>
<reference key="10">
    <citation type="journal article" date="2012" name="Proc. Natl. Acad. Sci. U.S.A.">
        <title>N-terminal acetylome analyses and functional insights of the N-terminal acetyltransferase NatB.</title>
        <authorList>
            <person name="Van Damme P."/>
            <person name="Lasa M."/>
            <person name="Polevoda B."/>
            <person name="Gazquez C."/>
            <person name="Elosegui-Artola A."/>
            <person name="Kim D.S."/>
            <person name="De Juan-Pardo E."/>
            <person name="Demeyer K."/>
            <person name="Hole K."/>
            <person name="Larrea E."/>
            <person name="Timmerman E."/>
            <person name="Prieto J."/>
            <person name="Arnesen T."/>
            <person name="Sherman F."/>
            <person name="Gevaert K."/>
            <person name="Aldabe R."/>
        </authorList>
    </citation>
    <scope>ACETYLATION [LARGE SCALE ANALYSIS] AT SER-2</scope>
    <scope>CLEAVAGE OF INITIATOR METHIONINE [LARGE SCALE ANALYSIS]</scope>
    <scope>IDENTIFICATION BY MASS SPECTROMETRY [LARGE SCALE ANALYSIS]</scope>
</reference>
<evidence type="ECO:0000255" key="1">
    <source>
        <dbReference type="PROSITE-ProRule" id="PRU00599"/>
    </source>
</evidence>
<evidence type="ECO:0000269" key="2">
    <source>
    </source>
</evidence>
<evidence type="ECO:0000269" key="3">
    <source>
    </source>
</evidence>
<evidence type="ECO:0000269" key="4">
    <source>
    </source>
</evidence>
<evidence type="ECO:0000305" key="5"/>
<evidence type="ECO:0007744" key="6">
    <source>
    </source>
</evidence>
<evidence type="ECO:0007744" key="7">
    <source>
    </source>
</evidence>
<evidence type="ECO:0007744" key="8">
    <source>
    </source>
</evidence>
<proteinExistence type="evidence at protein level"/>
<sequence>MSNLYKIGTETRNKIKKFRTSTARTDSIKALSIKIEPKPSYEIIVDEDEQEELDEIEDLSELAEILPDNSPRFVLTAYPTTTKDGFKQTPLVLVYWKPMTVVSQEWKMLYAGALEMIREECGTFKLIEVSSGLEDDSDVEELREQLENC</sequence>
<feature type="initiator methionine" description="Removed" evidence="8">
    <location>
        <position position="1"/>
    </location>
</feature>
<feature type="chain" id="PRO_0000244441" description="Protein AIM7">
    <location>
        <begin position="2"/>
        <end position="149"/>
    </location>
</feature>
<feature type="domain" description="ADF-H" evidence="1">
    <location>
        <begin position="3"/>
        <end position="147"/>
    </location>
</feature>
<feature type="modified residue" description="N-acetylserine" evidence="8">
    <location>
        <position position="2"/>
    </location>
</feature>
<feature type="modified residue" description="Phosphoserine" evidence="6 7">
    <location>
        <position position="137"/>
    </location>
</feature>
<keyword id="KW-0007">Acetylation</keyword>
<keyword id="KW-0963">Cytoplasm</keyword>
<keyword id="KW-0539">Nucleus</keyword>
<keyword id="KW-0597">Phosphoprotein</keyword>
<keyword id="KW-1185">Reference proteome</keyword>